<keyword id="KW-0627">Porphyrin biosynthesis</keyword>
<keyword id="KW-0808">Transferase</keyword>
<protein>
    <recommendedName>
        <fullName evidence="1">Porphobilinogen deaminase</fullName>
        <shortName evidence="1">PBG</shortName>
        <ecNumber evidence="1">2.5.1.61</ecNumber>
    </recommendedName>
    <alternativeName>
        <fullName evidence="1">Hydroxymethylbilane synthase</fullName>
        <shortName evidence="1">HMBS</shortName>
    </alternativeName>
    <alternativeName>
        <fullName evidence="1">Pre-uroporphyrinogen synthase</fullName>
    </alternativeName>
</protein>
<feature type="chain" id="PRO_1000119206" description="Porphobilinogen deaminase">
    <location>
        <begin position="1"/>
        <end position="306"/>
    </location>
</feature>
<feature type="modified residue" description="S-(dipyrrolylmethanemethyl)cysteine" evidence="1">
    <location>
        <position position="241"/>
    </location>
</feature>
<accession>B5ERN6</accession>
<gene>
    <name evidence="1" type="primary">hemC</name>
    <name type="ordered locus">Lferr_2898</name>
</gene>
<sequence length="306" mass="33039">MPHSLRIGTRASPLAVWQAEHVRAALLRLHPGMAVEIITMTTSGDVLLDAPLHALGGKGLFVKEIEDALQQRRVDVAVHSMKDVPALQPDGLEIVAIMAREDVRDAFVSNTFLHPDALPEGARVGSSSLRRRAQLLERYPHLRVEDLRGNVATRLRRLDEGHYDAIILAAAGLKRLGLPDRITHLLDIDRSLPAVGQGAIGIEARSDDRRTRELLAPLADADTQNCVLAERSMNQVLGGDCRLPVAALARWQGPQMLLRGLVATPDGRRVLHAEAKGSDPVALGMAVAAALVAQGAAEIIEDVRNA</sequence>
<comment type="function">
    <text evidence="1">Tetrapolymerization of the monopyrrole PBG into the hydroxymethylbilane pre-uroporphyrinogen in several discrete steps.</text>
</comment>
<comment type="catalytic activity">
    <reaction evidence="1">
        <text>4 porphobilinogen + H2O = hydroxymethylbilane + 4 NH4(+)</text>
        <dbReference type="Rhea" id="RHEA:13185"/>
        <dbReference type="ChEBI" id="CHEBI:15377"/>
        <dbReference type="ChEBI" id="CHEBI:28938"/>
        <dbReference type="ChEBI" id="CHEBI:57845"/>
        <dbReference type="ChEBI" id="CHEBI:58126"/>
        <dbReference type="EC" id="2.5.1.61"/>
    </reaction>
</comment>
<comment type="cofactor">
    <cofactor evidence="1">
        <name>dipyrromethane</name>
        <dbReference type="ChEBI" id="CHEBI:60342"/>
    </cofactor>
    <text evidence="1">Binds 1 dipyrromethane group covalently.</text>
</comment>
<comment type="pathway">
    <text evidence="1">Porphyrin-containing compound metabolism; protoporphyrin-IX biosynthesis; coproporphyrinogen-III from 5-aminolevulinate: step 2/4.</text>
</comment>
<comment type="subunit">
    <text evidence="1">Monomer.</text>
</comment>
<comment type="miscellaneous">
    <text evidence="1">The porphobilinogen subunits are added to the dipyrromethane group.</text>
</comment>
<comment type="similarity">
    <text evidence="1">Belongs to the HMBS family.</text>
</comment>
<organism>
    <name type="scientific">Acidithiobacillus ferrooxidans (strain ATCC 53993 / BNL-5-31)</name>
    <name type="common">Leptospirillum ferrooxidans (ATCC 53993)</name>
    <dbReference type="NCBI Taxonomy" id="380394"/>
    <lineage>
        <taxon>Bacteria</taxon>
        <taxon>Pseudomonadati</taxon>
        <taxon>Pseudomonadota</taxon>
        <taxon>Acidithiobacillia</taxon>
        <taxon>Acidithiobacillales</taxon>
        <taxon>Acidithiobacillaceae</taxon>
        <taxon>Acidithiobacillus</taxon>
    </lineage>
</organism>
<evidence type="ECO:0000255" key="1">
    <source>
        <dbReference type="HAMAP-Rule" id="MF_00260"/>
    </source>
</evidence>
<proteinExistence type="inferred from homology"/>
<name>HEM3_ACIF5</name>
<reference key="1">
    <citation type="submission" date="2008-08" db="EMBL/GenBank/DDBJ databases">
        <title>Complete sequence of Acidithiobacillus ferrooxidans ATCC 53993.</title>
        <authorList>
            <person name="Lucas S."/>
            <person name="Copeland A."/>
            <person name="Lapidus A."/>
            <person name="Glavina del Rio T."/>
            <person name="Dalin E."/>
            <person name="Tice H."/>
            <person name="Bruce D."/>
            <person name="Goodwin L."/>
            <person name="Pitluck S."/>
            <person name="Sims D."/>
            <person name="Brettin T."/>
            <person name="Detter J.C."/>
            <person name="Han C."/>
            <person name="Kuske C.R."/>
            <person name="Larimer F."/>
            <person name="Land M."/>
            <person name="Hauser L."/>
            <person name="Kyrpides N."/>
            <person name="Lykidis A."/>
            <person name="Borole A.P."/>
        </authorList>
    </citation>
    <scope>NUCLEOTIDE SEQUENCE [LARGE SCALE GENOMIC DNA]</scope>
    <source>
        <strain>ATCC 53993 / BNL-5-31</strain>
    </source>
</reference>
<dbReference type="EC" id="2.5.1.61" evidence="1"/>
<dbReference type="EMBL" id="CP001132">
    <property type="protein sequence ID" value="ACH85082.1"/>
    <property type="molecule type" value="Genomic_DNA"/>
</dbReference>
<dbReference type="RefSeq" id="WP_012537704.1">
    <property type="nucleotide sequence ID" value="NC_011206.1"/>
</dbReference>
<dbReference type="SMR" id="B5ERN6"/>
<dbReference type="GeneID" id="65282277"/>
<dbReference type="KEGG" id="afe:Lferr_2898"/>
<dbReference type="eggNOG" id="COG0181">
    <property type="taxonomic scope" value="Bacteria"/>
</dbReference>
<dbReference type="HOGENOM" id="CLU_019704_0_2_6"/>
<dbReference type="UniPathway" id="UPA00251">
    <property type="reaction ID" value="UER00319"/>
</dbReference>
<dbReference type="GO" id="GO:0005737">
    <property type="term" value="C:cytoplasm"/>
    <property type="evidence" value="ECO:0007669"/>
    <property type="project" value="TreeGrafter"/>
</dbReference>
<dbReference type="GO" id="GO:0004418">
    <property type="term" value="F:hydroxymethylbilane synthase activity"/>
    <property type="evidence" value="ECO:0007669"/>
    <property type="project" value="UniProtKB-UniRule"/>
</dbReference>
<dbReference type="GO" id="GO:0006782">
    <property type="term" value="P:protoporphyrinogen IX biosynthetic process"/>
    <property type="evidence" value="ECO:0007669"/>
    <property type="project" value="UniProtKB-UniRule"/>
</dbReference>
<dbReference type="CDD" id="cd13646">
    <property type="entry name" value="PBP2_EcHMBS_like"/>
    <property type="match status" value="1"/>
</dbReference>
<dbReference type="FunFam" id="3.40.190.10:FF:000004">
    <property type="entry name" value="Porphobilinogen deaminase"/>
    <property type="match status" value="1"/>
</dbReference>
<dbReference type="FunFam" id="3.40.190.10:FF:000005">
    <property type="entry name" value="Porphobilinogen deaminase"/>
    <property type="match status" value="1"/>
</dbReference>
<dbReference type="Gene3D" id="3.40.190.10">
    <property type="entry name" value="Periplasmic binding protein-like II"/>
    <property type="match status" value="2"/>
</dbReference>
<dbReference type="Gene3D" id="3.30.160.40">
    <property type="entry name" value="Porphobilinogen deaminase, C-terminal domain"/>
    <property type="match status" value="1"/>
</dbReference>
<dbReference type="HAMAP" id="MF_00260">
    <property type="entry name" value="Porphobil_deam"/>
    <property type="match status" value="1"/>
</dbReference>
<dbReference type="InterPro" id="IPR000860">
    <property type="entry name" value="HemC"/>
</dbReference>
<dbReference type="InterPro" id="IPR022417">
    <property type="entry name" value="Porphobilin_deaminase_N"/>
</dbReference>
<dbReference type="InterPro" id="IPR022418">
    <property type="entry name" value="Porphobilinogen_deaminase_C"/>
</dbReference>
<dbReference type="InterPro" id="IPR036803">
    <property type="entry name" value="Porphobilinogen_deaminase_C_sf"/>
</dbReference>
<dbReference type="NCBIfam" id="TIGR00212">
    <property type="entry name" value="hemC"/>
    <property type="match status" value="1"/>
</dbReference>
<dbReference type="PANTHER" id="PTHR11557">
    <property type="entry name" value="PORPHOBILINOGEN DEAMINASE"/>
    <property type="match status" value="1"/>
</dbReference>
<dbReference type="PANTHER" id="PTHR11557:SF0">
    <property type="entry name" value="PORPHOBILINOGEN DEAMINASE"/>
    <property type="match status" value="1"/>
</dbReference>
<dbReference type="Pfam" id="PF01379">
    <property type="entry name" value="Porphobil_deam"/>
    <property type="match status" value="1"/>
</dbReference>
<dbReference type="Pfam" id="PF03900">
    <property type="entry name" value="Porphobil_deamC"/>
    <property type="match status" value="1"/>
</dbReference>
<dbReference type="PIRSF" id="PIRSF001438">
    <property type="entry name" value="4pyrrol_synth_OHMeBilane_synth"/>
    <property type="match status" value="1"/>
</dbReference>
<dbReference type="PRINTS" id="PR00151">
    <property type="entry name" value="PORPHBDMNASE"/>
</dbReference>
<dbReference type="SUPFAM" id="SSF53850">
    <property type="entry name" value="Periplasmic binding protein-like II"/>
    <property type="match status" value="1"/>
</dbReference>
<dbReference type="SUPFAM" id="SSF54782">
    <property type="entry name" value="Porphobilinogen deaminase (hydroxymethylbilane synthase), C-terminal domain"/>
    <property type="match status" value="1"/>
</dbReference>